<comment type="function">
    <text>Mating ciliate pheromones (or gamones) are diffusible extracellular communication signals that distinguish different intraspecific classes of cells commonly referred to as 'mating types'. They prepare the latter for conjugation by changing their cell surface properties.</text>
</comment>
<comment type="subcellular location">
    <subcellularLocation>
        <location>Secreted</location>
    </subcellularLocation>
</comment>
<accession>O15825</accession>
<evidence type="ECO:0000255" key="1"/>
<sequence length="154" mass="17193">MKAIFIILAILMVTQAFKMTSKVNTKLQSQIQSKFQSKNKLASTFQTSSQLKDSCLNDPEQRFYITGCSNNPVCGDAFDCSATGDDEEKCDAVGQNVIDLFYYFWGTCVNDYASCIMFAATTYNMYSGPENCGCINQVSYADWLDYFDCPSFSG</sequence>
<feature type="signal peptide" evidence="1">
    <location>
        <begin position="1"/>
        <end position="16"/>
    </location>
</feature>
<feature type="propeptide" id="PRO_0000008676" evidence="1">
    <location>
        <begin position="17"/>
        <end position="52"/>
    </location>
</feature>
<feature type="peptide" id="PRO_0000008677" description="Mating pheromone 2">
    <location>
        <begin position="53"/>
        <end position="154"/>
    </location>
</feature>
<proteinExistence type="inferred from homology"/>
<reference key="1">
    <citation type="journal article" date="1998" name="Eur. J. Protist.">
        <title>The pheromones and pheromone genes of new stocks of the Euplotes octocarinatus species complex.</title>
        <authorList>
            <person name="Bruenen-Nieweler C."/>
            <person name="Weiligmann J.C."/>
            <person name="Hansen B."/>
            <person name="Kuhlmann H.W."/>
            <person name="Moellenbeck M."/>
            <person name="Heckmann K."/>
        </authorList>
    </citation>
    <scope>NUCLEOTIDE SEQUENCE [GENOMIC DNA]</scope>
    <source>
        <strain>Fl-12</strain>
    </source>
</reference>
<protein>
    <recommendedName>
        <fullName>Mating pheromone 2</fullName>
    </recommendedName>
</protein>
<organism>
    <name type="scientific">Euplotoides octocarinatus</name>
    <name type="common">Freshwater ciliate</name>
    <name type="synonym">Euplotes octocarinatus</name>
    <dbReference type="NCBI Taxonomy" id="2716877"/>
    <lineage>
        <taxon>Eukaryota</taxon>
        <taxon>Sar</taxon>
        <taxon>Alveolata</taxon>
        <taxon>Ciliophora</taxon>
        <taxon>Intramacronucleata</taxon>
        <taxon>Spirotrichea</taxon>
        <taxon>Hypotrichia</taxon>
        <taxon>Euplotida</taxon>
        <taxon>Euplotidae</taxon>
        <taxon>Euplotes</taxon>
    </lineage>
</organism>
<keyword id="KW-0588">Pheromone</keyword>
<keyword id="KW-0964">Secreted</keyword>
<keyword id="KW-0732">Signal</keyword>
<dbReference type="EMBL" id="Y15318">
    <property type="protein sequence ID" value="CAA75580.1"/>
    <property type="molecule type" value="Genomic_DNA"/>
</dbReference>
<dbReference type="GO" id="GO:0005576">
    <property type="term" value="C:extracellular region"/>
    <property type="evidence" value="ECO:0007669"/>
    <property type="project" value="UniProtKB-SubCell"/>
</dbReference>
<dbReference type="GO" id="GO:0005186">
    <property type="term" value="F:pheromone activity"/>
    <property type="evidence" value="ECO:0007669"/>
    <property type="project" value="UniProtKB-KW"/>
</dbReference>
<dbReference type="InterPro" id="IPR008612">
    <property type="entry name" value="Mating_pheromone_EUPOC"/>
</dbReference>
<dbReference type="Pfam" id="PF05842">
    <property type="entry name" value="Euplotes_phero"/>
    <property type="match status" value="1"/>
</dbReference>
<name>MER2_EUPOC</name>